<evidence type="ECO:0000255" key="1">
    <source>
        <dbReference type="PROSITE-ProRule" id="PRU00040"/>
    </source>
</evidence>
<evidence type="ECO:0000269" key="2">
    <source>
    </source>
</evidence>
<evidence type="ECO:0000305" key="3"/>
<name>SLB_BOTAS</name>
<sequence>DCPSDWSSYEGHCYRVFKPPKDWADAERFCSQQAKGGHLVSIERFGREDFVSNLITKNLQRG</sequence>
<feature type="chain" id="PRO_0000415318" description="Snaclec aspercetin subunit beta">
    <location>
        <begin position="1"/>
        <end position="62" status="greater than"/>
    </location>
</feature>
<feature type="domain" description="C-type lectin" evidence="1">
    <location>
        <begin position="9"/>
        <end position="62" status="greater than"/>
    </location>
</feature>
<feature type="disulfide bond" evidence="1">
    <location>
        <begin position="2"/>
        <end position="13"/>
    </location>
</feature>
<feature type="disulfide bond" evidence="1">
    <location>
        <begin position="30"/>
        <end status="unknown"/>
    </location>
</feature>
<feature type="unsure residue" description="Assigned by comparison with orthologs">
    <location>
        <position position="2"/>
    </location>
</feature>
<feature type="unsure residue" description="Assigned by comparison with orthologs">
    <location>
        <position position="30"/>
    </location>
</feature>
<feature type="non-terminal residue">
    <location>
        <position position="62"/>
    </location>
</feature>
<proteinExistence type="evidence at protein level"/>
<dbReference type="SMR" id="P0DJC9"/>
<dbReference type="GO" id="GO:0005576">
    <property type="term" value="C:extracellular region"/>
    <property type="evidence" value="ECO:0007669"/>
    <property type="project" value="UniProtKB-SubCell"/>
</dbReference>
<dbReference type="GO" id="GO:0090729">
    <property type="term" value="F:toxin activity"/>
    <property type="evidence" value="ECO:0007669"/>
    <property type="project" value="UniProtKB-KW"/>
</dbReference>
<dbReference type="Gene3D" id="3.10.100.10">
    <property type="entry name" value="Mannose-Binding Protein A, subunit A"/>
    <property type="match status" value="1"/>
</dbReference>
<dbReference type="InterPro" id="IPR001304">
    <property type="entry name" value="C-type_lectin-like"/>
</dbReference>
<dbReference type="InterPro" id="IPR016186">
    <property type="entry name" value="C-type_lectin-like/link_sf"/>
</dbReference>
<dbReference type="InterPro" id="IPR050111">
    <property type="entry name" value="C-type_lectin/snaclec_domain"/>
</dbReference>
<dbReference type="InterPro" id="IPR016187">
    <property type="entry name" value="CTDL_fold"/>
</dbReference>
<dbReference type="PANTHER" id="PTHR22803">
    <property type="entry name" value="MANNOSE, PHOSPHOLIPASE, LECTIN RECEPTOR RELATED"/>
    <property type="match status" value="1"/>
</dbReference>
<dbReference type="SUPFAM" id="SSF56436">
    <property type="entry name" value="C-type lectin-like"/>
    <property type="match status" value="1"/>
</dbReference>
<dbReference type="PROSITE" id="PS50041">
    <property type="entry name" value="C_TYPE_LECTIN_2"/>
    <property type="match status" value="1"/>
</dbReference>
<accession>P0DJC9</accession>
<keyword id="KW-0903">Direct protein sequencing</keyword>
<keyword id="KW-1015">Disulfide bond</keyword>
<keyword id="KW-1199">Hemostasis impairing toxin</keyword>
<keyword id="KW-1202">Platelet aggregation activating toxin</keyword>
<keyword id="KW-0964">Secreted</keyword>
<keyword id="KW-0800">Toxin</keyword>
<organism>
    <name type="scientific">Bothrops asper</name>
    <name type="common">Terciopelo</name>
    <dbReference type="NCBI Taxonomy" id="8722"/>
    <lineage>
        <taxon>Eukaryota</taxon>
        <taxon>Metazoa</taxon>
        <taxon>Chordata</taxon>
        <taxon>Craniata</taxon>
        <taxon>Vertebrata</taxon>
        <taxon>Euteleostomi</taxon>
        <taxon>Lepidosauria</taxon>
        <taxon>Squamata</taxon>
        <taxon>Bifurcata</taxon>
        <taxon>Unidentata</taxon>
        <taxon>Episquamata</taxon>
        <taxon>Toxicofera</taxon>
        <taxon>Serpentes</taxon>
        <taxon>Colubroidea</taxon>
        <taxon>Viperidae</taxon>
        <taxon>Crotalinae</taxon>
        <taxon>Bothrops</taxon>
    </lineage>
</organism>
<protein>
    <recommendedName>
        <fullName>Snaclec aspercetin subunit beta</fullName>
    </recommendedName>
</protein>
<comment type="function">
    <text evidence="2">Snaclec that binds to von Willebrand factor (VWF) and induces its interaction with GPIbalpha (GP1BA) (via the vWF A1 domain), resulting in platelet aggregation. Intramuscular and intravenous injections in mice induce a dose-dependent drop in platelet count (thrombocytopenia). Pretreatment by intravenous injection by this protein in mice potentiates the hemorrhagic lesion in the skin provoked by the metalloproteinase BaP1 intradermally injected. This result is not observed when both BaP1 and this protein are injected simultaneously.</text>
</comment>
<comment type="subunit">
    <text evidence="2">Heterodimer; disulfide-linked.</text>
</comment>
<comment type="subcellular location">
    <subcellularLocation>
        <location evidence="2">Secreted</location>
    </subcellularLocation>
</comment>
<comment type="tissue specificity">
    <text>Expressed by the venom gland.</text>
</comment>
<comment type="similarity">
    <text evidence="3">Belongs to the snaclec family.</text>
</comment>
<reference key="1">
    <citation type="journal article" date="2001" name="Thromb. Haemost.">
        <title>Characterization of aspercetin, a platelet aggregating component from the venom of the snake Bothrops asper which induces thrombocytopenia and potentiates metalloproteinase-induced hemorrhage.</title>
        <authorList>
            <person name="Rucavado A."/>
            <person name="Soto M."/>
            <person name="Kamiguti A.S."/>
            <person name="Theakston R.D."/>
            <person name="Fox J.W."/>
            <person name="Escalante T."/>
            <person name="Gutierrez J.M."/>
        </authorList>
    </citation>
    <scope>PROTEIN SEQUENCE</scope>
    <scope>FUNCTION</scope>
    <scope>SUBUNIT</scope>
    <scope>SUBCELLULAR LOCATION</scope>
    <scope>IDENTIFICATION BY MASS SPECTROMETRY</scope>
    <source>
        <tissue>Venom</tissue>
    </source>
</reference>